<comment type="function">
    <text evidence="1">Catalyzes the ATP-dependent phosphorylation of N-acetyl-L-glutamate.</text>
</comment>
<comment type="catalytic activity">
    <reaction evidence="1">
        <text>N-acetyl-L-glutamate + ATP = N-acetyl-L-glutamyl 5-phosphate + ADP</text>
        <dbReference type="Rhea" id="RHEA:14629"/>
        <dbReference type="ChEBI" id="CHEBI:30616"/>
        <dbReference type="ChEBI" id="CHEBI:44337"/>
        <dbReference type="ChEBI" id="CHEBI:57936"/>
        <dbReference type="ChEBI" id="CHEBI:456216"/>
        <dbReference type="EC" id="2.7.2.8"/>
    </reaction>
</comment>
<comment type="pathway">
    <text evidence="1">Amino-acid biosynthesis; L-arginine biosynthesis; N(2)-acetyl-L-ornithine from L-glutamate: step 2/4.</text>
</comment>
<comment type="subcellular location">
    <subcellularLocation>
        <location evidence="1">Cytoplasm</location>
    </subcellularLocation>
</comment>
<comment type="similarity">
    <text evidence="1">Belongs to the acetylglutamate kinase family. ArgB subfamily.</text>
</comment>
<feature type="chain" id="PRO_0000112582" description="Acetylglutamate kinase">
    <location>
        <begin position="1"/>
        <end position="260"/>
    </location>
</feature>
<feature type="binding site" evidence="1">
    <location>
        <begin position="41"/>
        <end position="42"/>
    </location>
    <ligand>
        <name>substrate</name>
    </ligand>
</feature>
<feature type="binding site" evidence="1">
    <location>
        <position position="63"/>
    </location>
    <ligand>
        <name>substrate</name>
    </ligand>
</feature>
<feature type="binding site" evidence="1">
    <location>
        <position position="156"/>
    </location>
    <ligand>
        <name>substrate</name>
    </ligand>
</feature>
<feature type="site" description="Transition state stabilizer" evidence="1">
    <location>
        <position position="8"/>
    </location>
</feature>
<feature type="site" description="Transition state stabilizer" evidence="1">
    <location>
        <position position="215"/>
    </location>
</feature>
<protein>
    <recommendedName>
        <fullName evidence="1">Acetylglutamate kinase</fullName>
        <ecNumber evidence="1">2.7.2.8</ecNumber>
    </recommendedName>
    <alternativeName>
        <fullName evidence="1">N-acetyl-L-glutamate 5-phosphotransferase</fullName>
    </alternativeName>
    <alternativeName>
        <fullName evidence="1">NAG kinase</fullName>
        <shortName evidence="1">NAGK</shortName>
    </alternativeName>
</protein>
<gene>
    <name evidence="1" type="primary">argB</name>
    <name type="ordered locus">BH2898</name>
</gene>
<dbReference type="EC" id="2.7.2.8" evidence="1"/>
<dbReference type="EMBL" id="BA000004">
    <property type="protein sequence ID" value="BAB06617.1"/>
    <property type="molecule type" value="Genomic_DNA"/>
</dbReference>
<dbReference type="PIR" id="B84012">
    <property type="entry name" value="B84012"/>
</dbReference>
<dbReference type="RefSeq" id="WP_010899045.1">
    <property type="nucleotide sequence ID" value="NC_002570.2"/>
</dbReference>
<dbReference type="SMR" id="Q9K8V4"/>
<dbReference type="STRING" id="272558.gene:10728808"/>
<dbReference type="KEGG" id="bha:BH2898"/>
<dbReference type="eggNOG" id="COG0548">
    <property type="taxonomic scope" value="Bacteria"/>
</dbReference>
<dbReference type="HOGENOM" id="CLU_053680_1_0_9"/>
<dbReference type="OrthoDB" id="9803155at2"/>
<dbReference type="UniPathway" id="UPA00068">
    <property type="reaction ID" value="UER00107"/>
</dbReference>
<dbReference type="Proteomes" id="UP000001258">
    <property type="component" value="Chromosome"/>
</dbReference>
<dbReference type="GO" id="GO:0005737">
    <property type="term" value="C:cytoplasm"/>
    <property type="evidence" value="ECO:0007669"/>
    <property type="project" value="UniProtKB-SubCell"/>
</dbReference>
<dbReference type="GO" id="GO:0003991">
    <property type="term" value="F:acetylglutamate kinase activity"/>
    <property type="evidence" value="ECO:0007669"/>
    <property type="project" value="UniProtKB-UniRule"/>
</dbReference>
<dbReference type="GO" id="GO:0005524">
    <property type="term" value="F:ATP binding"/>
    <property type="evidence" value="ECO:0007669"/>
    <property type="project" value="UniProtKB-UniRule"/>
</dbReference>
<dbReference type="GO" id="GO:0042450">
    <property type="term" value="P:arginine biosynthetic process via ornithine"/>
    <property type="evidence" value="ECO:0007669"/>
    <property type="project" value="UniProtKB-UniRule"/>
</dbReference>
<dbReference type="GO" id="GO:0006526">
    <property type="term" value="P:L-arginine biosynthetic process"/>
    <property type="evidence" value="ECO:0007669"/>
    <property type="project" value="UniProtKB-UniPathway"/>
</dbReference>
<dbReference type="CDD" id="cd04238">
    <property type="entry name" value="AAK_NAGK-like"/>
    <property type="match status" value="1"/>
</dbReference>
<dbReference type="FunFam" id="3.40.1160.10:FF:000004">
    <property type="entry name" value="Acetylglutamate kinase"/>
    <property type="match status" value="1"/>
</dbReference>
<dbReference type="Gene3D" id="3.40.1160.10">
    <property type="entry name" value="Acetylglutamate kinase-like"/>
    <property type="match status" value="1"/>
</dbReference>
<dbReference type="HAMAP" id="MF_00082">
    <property type="entry name" value="ArgB"/>
    <property type="match status" value="1"/>
</dbReference>
<dbReference type="InterPro" id="IPR036393">
    <property type="entry name" value="AceGlu_kinase-like_sf"/>
</dbReference>
<dbReference type="InterPro" id="IPR004662">
    <property type="entry name" value="AcgluKinase_fam"/>
</dbReference>
<dbReference type="InterPro" id="IPR037528">
    <property type="entry name" value="ArgB"/>
</dbReference>
<dbReference type="InterPro" id="IPR001048">
    <property type="entry name" value="Asp/Glu/Uridylate_kinase"/>
</dbReference>
<dbReference type="NCBIfam" id="TIGR00761">
    <property type="entry name" value="argB"/>
    <property type="match status" value="1"/>
</dbReference>
<dbReference type="PANTHER" id="PTHR23342">
    <property type="entry name" value="N-ACETYLGLUTAMATE SYNTHASE"/>
    <property type="match status" value="1"/>
</dbReference>
<dbReference type="PANTHER" id="PTHR23342:SF0">
    <property type="entry name" value="N-ACETYLGLUTAMATE SYNTHASE, MITOCHONDRIAL"/>
    <property type="match status" value="1"/>
</dbReference>
<dbReference type="Pfam" id="PF00696">
    <property type="entry name" value="AA_kinase"/>
    <property type="match status" value="1"/>
</dbReference>
<dbReference type="PIRSF" id="PIRSF000728">
    <property type="entry name" value="NAGK"/>
    <property type="match status" value="1"/>
</dbReference>
<dbReference type="SUPFAM" id="SSF53633">
    <property type="entry name" value="Carbamate kinase-like"/>
    <property type="match status" value="1"/>
</dbReference>
<reference key="1">
    <citation type="journal article" date="2000" name="Nucleic Acids Res.">
        <title>Complete genome sequence of the alkaliphilic bacterium Bacillus halodurans and genomic sequence comparison with Bacillus subtilis.</title>
        <authorList>
            <person name="Takami H."/>
            <person name="Nakasone K."/>
            <person name="Takaki Y."/>
            <person name="Maeno G."/>
            <person name="Sasaki R."/>
            <person name="Masui N."/>
            <person name="Fuji F."/>
            <person name="Hirama C."/>
            <person name="Nakamura Y."/>
            <person name="Ogasawara N."/>
            <person name="Kuhara S."/>
            <person name="Horikoshi K."/>
        </authorList>
    </citation>
    <scope>NUCLEOTIDE SEQUENCE [LARGE SCALE GENOMIC DNA]</scope>
    <source>
        <strain>ATCC BAA-125 / DSM 18197 / FERM 7344 / JCM 9153 / C-125</strain>
    </source>
</reference>
<sequence length="260" mass="27247">MGDIVVIKCGGSVLDSLSDSFFTSVRRLQAEGAKPIIVHGGGPAINGMLAKLEVETTFVDGLRKTTDSVLSVAEMVLCGQTNKKVVRKLQKAGVKSIGLSGSDGELVRVKAIDEAILGYVGEPVHVNGELLHMLVADGFVPVLAPIGVNDEFEPYNVNADTVAGAVATALQAKELIFVTDVAGILKDDELVPALTPEEVESLIEEGTIYGGMIPKVRSAIHSLTGTLEAVSIVNGNDVFFAESGKLIGTTIKKQVIHSQG</sequence>
<keyword id="KW-0028">Amino-acid biosynthesis</keyword>
<keyword id="KW-0055">Arginine biosynthesis</keyword>
<keyword id="KW-0067">ATP-binding</keyword>
<keyword id="KW-0963">Cytoplasm</keyword>
<keyword id="KW-0418">Kinase</keyword>
<keyword id="KW-0547">Nucleotide-binding</keyword>
<keyword id="KW-1185">Reference proteome</keyword>
<keyword id="KW-0808">Transferase</keyword>
<evidence type="ECO:0000255" key="1">
    <source>
        <dbReference type="HAMAP-Rule" id="MF_00082"/>
    </source>
</evidence>
<proteinExistence type="inferred from homology"/>
<organism>
    <name type="scientific">Halalkalibacterium halodurans (strain ATCC BAA-125 / DSM 18197 / FERM 7344 / JCM 9153 / C-125)</name>
    <name type="common">Bacillus halodurans</name>
    <dbReference type="NCBI Taxonomy" id="272558"/>
    <lineage>
        <taxon>Bacteria</taxon>
        <taxon>Bacillati</taxon>
        <taxon>Bacillota</taxon>
        <taxon>Bacilli</taxon>
        <taxon>Bacillales</taxon>
        <taxon>Bacillaceae</taxon>
        <taxon>Halalkalibacterium (ex Joshi et al. 2022)</taxon>
    </lineage>
</organism>
<accession>Q9K8V4</accession>
<name>ARGB_HALH5</name>